<feature type="chain" id="PRO_0000265975" description="Homeobox protein Hox-B1a">
    <location>
        <begin position="1"/>
        <end position="391"/>
    </location>
</feature>
<feature type="DNA-binding region" description="Homeobox" evidence="2">
    <location>
        <begin position="286"/>
        <end position="345"/>
    </location>
</feature>
<feature type="region of interest" description="Disordered" evidence="3">
    <location>
        <begin position="62"/>
        <end position="125"/>
    </location>
</feature>
<feature type="region of interest" description="Disordered" evidence="3">
    <location>
        <begin position="231"/>
        <end position="260"/>
    </location>
</feature>
<feature type="region of interest" description="Disordered" evidence="3">
    <location>
        <begin position="337"/>
        <end position="391"/>
    </location>
</feature>
<feature type="short sequence motif" description="Antp-type hexapeptide">
    <location>
        <begin position="260"/>
        <end position="265"/>
    </location>
</feature>
<feature type="compositionally biased region" description="Low complexity" evidence="3">
    <location>
        <begin position="87"/>
        <end position="100"/>
    </location>
</feature>
<feature type="compositionally biased region" description="Low complexity" evidence="3">
    <location>
        <begin position="371"/>
        <end position="385"/>
    </location>
</feature>
<comment type="function">
    <text evidence="1">Sequence-specific transcription factor which is part of a developmental regulatory system that provides cells with specific positional identities on the anterior-posterior axis.</text>
</comment>
<comment type="subcellular location">
    <subcellularLocation>
        <location evidence="2">Nucleus</location>
    </subcellularLocation>
</comment>
<comment type="similarity">
    <text evidence="4">Belongs to the Antp homeobox family. Labial subfamily.</text>
</comment>
<protein>
    <recommendedName>
        <fullName>Homeobox protein Hox-B1a</fullName>
    </recommendedName>
</protein>
<accession>Q1KKX5</accession>
<evidence type="ECO:0000250" key="1"/>
<evidence type="ECO:0000255" key="2">
    <source>
        <dbReference type="PROSITE-ProRule" id="PRU00108"/>
    </source>
</evidence>
<evidence type="ECO:0000256" key="3">
    <source>
        <dbReference type="SAM" id="MobiDB-lite"/>
    </source>
</evidence>
<evidence type="ECO:0000305" key="4"/>
<dbReference type="EMBL" id="DQ481665">
    <property type="protein sequence ID" value="ABF22419.1"/>
    <property type="molecule type" value="Genomic_DNA"/>
</dbReference>
<dbReference type="SMR" id="Q1KKX5"/>
<dbReference type="FunCoup" id="Q1KKX5">
    <property type="interactions" value="121"/>
</dbReference>
<dbReference type="STRING" id="31033.ENSTRUP00000025249"/>
<dbReference type="Ensembl" id="ENSTRUT00000025352.3">
    <property type="protein sequence ID" value="ENSTRUP00000025249.3"/>
    <property type="gene ID" value="ENSTRUG00000010036.3"/>
</dbReference>
<dbReference type="GeneID" id="101062167"/>
<dbReference type="KEGG" id="tru:101062167"/>
<dbReference type="CTD" id="30337"/>
<dbReference type="eggNOG" id="KOG0489">
    <property type="taxonomic scope" value="Eukaryota"/>
</dbReference>
<dbReference type="GeneTree" id="ENSGT00940000166856"/>
<dbReference type="InParanoid" id="Q1KKX5"/>
<dbReference type="OMA" id="HHEQHTH"/>
<dbReference type="OrthoDB" id="6159439at2759"/>
<dbReference type="TreeFam" id="TF317730"/>
<dbReference type="Proteomes" id="UP000005226">
    <property type="component" value="Chromosome 5"/>
</dbReference>
<dbReference type="GO" id="GO:0005634">
    <property type="term" value="C:nucleus"/>
    <property type="evidence" value="ECO:0007669"/>
    <property type="project" value="UniProtKB-SubCell"/>
</dbReference>
<dbReference type="GO" id="GO:0000981">
    <property type="term" value="F:DNA-binding transcription factor activity, RNA polymerase II-specific"/>
    <property type="evidence" value="ECO:0007669"/>
    <property type="project" value="InterPro"/>
</dbReference>
<dbReference type="GO" id="GO:0000978">
    <property type="term" value="F:RNA polymerase II cis-regulatory region sequence-specific DNA binding"/>
    <property type="evidence" value="ECO:0007669"/>
    <property type="project" value="TreeGrafter"/>
</dbReference>
<dbReference type="CDD" id="cd00086">
    <property type="entry name" value="homeodomain"/>
    <property type="match status" value="1"/>
</dbReference>
<dbReference type="FunFam" id="1.10.10.60:FF:000113">
    <property type="entry name" value="homeobox protein Hox-B1"/>
    <property type="match status" value="1"/>
</dbReference>
<dbReference type="Gene3D" id="1.10.10.60">
    <property type="entry name" value="Homeodomain-like"/>
    <property type="match status" value="1"/>
</dbReference>
<dbReference type="InterPro" id="IPR001356">
    <property type="entry name" value="HD"/>
</dbReference>
<dbReference type="InterPro" id="IPR020479">
    <property type="entry name" value="HD_metazoa"/>
</dbReference>
<dbReference type="InterPro" id="IPR017970">
    <property type="entry name" value="Homeobox_CS"/>
</dbReference>
<dbReference type="InterPro" id="IPR009057">
    <property type="entry name" value="Homeodomain-like_sf"/>
</dbReference>
<dbReference type="InterPro" id="IPR046327">
    <property type="entry name" value="HXA1/B1/D1"/>
</dbReference>
<dbReference type="PANTHER" id="PTHR45946:SF5">
    <property type="entry name" value="HOMEOBOX PROTEIN HOX-B1"/>
    <property type="match status" value="1"/>
</dbReference>
<dbReference type="PANTHER" id="PTHR45946">
    <property type="entry name" value="HOMEOBOX PROTEIN ROUGH-RELATED"/>
    <property type="match status" value="1"/>
</dbReference>
<dbReference type="Pfam" id="PF00046">
    <property type="entry name" value="Homeodomain"/>
    <property type="match status" value="1"/>
</dbReference>
<dbReference type="PRINTS" id="PR00024">
    <property type="entry name" value="HOMEOBOX"/>
</dbReference>
<dbReference type="SMART" id="SM00389">
    <property type="entry name" value="HOX"/>
    <property type="match status" value="1"/>
</dbReference>
<dbReference type="SUPFAM" id="SSF46689">
    <property type="entry name" value="Homeodomain-like"/>
    <property type="match status" value="1"/>
</dbReference>
<dbReference type="PROSITE" id="PS00027">
    <property type="entry name" value="HOMEOBOX_1"/>
    <property type="match status" value="1"/>
</dbReference>
<dbReference type="PROSITE" id="PS50071">
    <property type="entry name" value="HOMEOBOX_2"/>
    <property type="match status" value="1"/>
</dbReference>
<reference key="1">
    <citation type="journal article" date="2006" name="Proc. Natl. Acad. Sci. U.S.A.">
        <title>Highly conserved syntenic blocks at the vertebrate Hox loci and conserved regulatory elements within and outside Hox gene clusters.</title>
        <authorList>
            <person name="Lee A.P."/>
            <person name="Koh E.G.L."/>
            <person name="Tay A."/>
            <person name="Brenner S."/>
            <person name="Venkatesh B."/>
        </authorList>
    </citation>
    <scope>NUCLEOTIDE SEQUENCE [GENOMIC DNA]</scope>
</reference>
<sequence>MDNMNSFVEYSICNRPATGAYSVPKSGYHSHHHLHHHHHPLDQNQGFPVTTGSFHTGLAASPAAVNGSRTDSSAPGAVYNPDGRLYGTAGEEGAHGATGTSQHHHQHPHHFPEQQPEQNGYSHPHLQTQTLQSGTLSHYNHGSSGSAYAGQSCARNSEYASTNTIHSHYYMEEPAASTYYHQSSFTSTAPTVGPSYGALAGAYCGPQGALAGSQYPQQLVGGLDAAGYLGLPQGGYGEPQTTQERERGGEEGQQAGQGQTFDWMKVKRNPPKTVKVSDFGLAGAHNSAIRTNFSTRQLTELEKEFHFSKYLTRARRVEIAATLELNETQVKIWFQNRRMKQKKREREGGCATPRTPSSSGFNKELEDTDHSSTSTSPGASPSSETSSERAA</sequence>
<proteinExistence type="inferred from homology"/>
<keyword id="KW-0217">Developmental protein</keyword>
<keyword id="KW-0238">DNA-binding</keyword>
<keyword id="KW-0371">Homeobox</keyword>
<keyword id="KW-0539">Nucleus</keyword>
<keyword id="KW-1185">Reference proteome</keyword>
<keyword id="KW-0804">Transcription</keyword>
<keyword id="KW-0805">Transcription regulation</keyword>
<organism>
    <name type="scientific">Takifugu rubripes</name>
    <name type="common">Japanese pufferfish</name>
    <name type="synonym">Fugu rubripes</name>
    <dbReference type="NCBI Taxonomy" id="31033"/>
    <lineage>
        <taxon>Eukaryota</taxon>
        <taxon>Metazoa</taxon>
        <taxon>Chordata</taxon>
        <taxon>Craniata</taxon>
        <taxon>Vertebrata</taxon>
        <taxon>Euteleostomi</taxon>
        <taxon>Actinopterygii</taxon>
        <taxon>Neopterygii</taxon>
        <taxon>Teleostei</taxon>
        <taxon>Neoteleostei</taxon>
        <taxon>Acanthomorphata</taxon>
        <taxon>Eupercaria</taxon>
        <taxon>Tetraodontiformes</taxon>
        <taxon>Tetradontoidea</taxon>
        <taxon>Tetraodontidae</taxon>
        <taxon>Takifugu</taxon>
    </lineage>
</organism>
<gene>
    <name type="primary">hoxb1a</name>
</gene>
<name>HXB1A_TAKRU</name>